<evidence type="ECO:0000255" key="1">
    <source>
        <dbReference type="HAMAP-Rule" id="MF_01863"/>
    </source>
</evidence>
<evidence type="ECO:0000256" key="2">
    <source>
        <dbReference type="SAM" id="MobiDB-lite"/>
    </source>
</evidence>
<feature type="chain" id="PRO_0000372762" description="UPF0741 protein SSP2119">
    <location>
        <begin position="1"/>
        <end position="112"/>
    </location>
</feature>
<feature type="region of interest" description="Disordered" evidence="2">
    <location>
        <begin position="68"/>
        <end position="112"/>
    </location>
</feature>
<feature type="coiled-coil region" evidence="1">
    <location>
        <begin position="75"/>
        <end position="112"/>
    </location>
</feature>
<gene>
    <name type="ordered locus">SSP2119</name>
</gene>
<name>Y2119_STAS1</name>
<protein>
    <recommendedName>
        <fullName evidence="1">UPF0741 protein SSP2119</fullName>
    </recommendedName>
</protein>
<comment type="similarity">
    <text evidence="1">Belongs to the UPF0741 family.</text>
</comment>
<reference key="1">
    <citation type="journal article" date="2005" name="Proc. Natl. Acad. Sci. U.S.A.">
        <title>Whole genome sequence of Staphylococcus saprophyticus reveals the pathogenesis of uncomplicated urinary tract infection.</title>
        <authorList>
            <person name="Kuroda M."/>
            <person name="Yamashita A."/>
            <person name="Hirakawa H."/>
            <person name="Kumano M."/>
            <person name="Morikawa K."/>
            <person name="Higashide M."/>
            <person name="Maruyama A."/>
            <person name="Inose Y."/>
            <person name="Matoba K."/>
            <person name="Toh H."/>
            <person name="Kuhara S."/>
            <person name="Hattori M."/>
            <person name="Ohta T."/>
        </authorList>
    </citation>
    <scope>NUCLEOTIDE SEQUENCE [LARGE SCALE GENOMIC DNA]</scope>
    <source>
        <strain>ATCC 15305 / DSM 20229 / NCIMB 8711 / NCTC 7292 / S-41</strain>
    </source>
</reference>
<organism>
    <name type="scientific">Staphylococcus saprophyticus subsp. saprophyticus (strain ATCC 15305 / DSM 20229 / NCIMB 8711 / NCTC 7292 / S-41)</name>
    <dbReference type="NCBI Taxonomy" id="342451"/>
    <lineage>
        <taxon>Bacteria</taxon>
        <taxon>Bacillati</taxon>
        <taxon>Bacillota</taxon>
        <taxon>Bacilli</taxon>
        <taxon>Bacillales</taxon>
        <taxon>Staphylococcaceae</taxon>
        <taxon>Staphylococcus</taxon>
    </lineage>
</organism>
<keyword id="KW-0175">Coiled coil</keyword>
<keyword id="KW-1185">Reference proteome</keyword>
<accession>Q49VE6</accession>
<dbReference type="EMBL" id="AP008934">
    <property type="protein sequence ID" value="BAE19264.1"/>
    <property type="molecule type" value="Genomic_DNA"/>
</dbReference>
<dbReference type="RefSeq" id="WP_011303757.1">
    <property type="nucleotide sequence ID" value="NZ_MTGA01000039.1"/>
</dbReference>
<dbReference type="SMR" id="Q49VE6"/>
<dbReference type="GeneID" id="3616327"/>
<dbReference type="KEGG" id="ssp:SSP2119"/>
<dbReference type="PATRIC" id="fig|342451.11.peg.2112"/>
<dbReference type="eggNOG" id="COG4844">
    <property type="taxonomic scope" value="Bacteria"/>
</dbReference>
<dbReference type="HOGENOM" id="CLU_2156795_0_0_9"/>
<dbReference type="OrthoDB" id="1645211at2"/>
<dbReference type="Proteomes" id="UP000006371">
    <property type="component" value="Chromosome"/>
</dbReference>
<dbReference type="HAMAP" id="MF_01863">
    <property type="entry name" value="UPF0741"/>
    <property type="match status" value="1"/>
</dbReference>
<dbReference type="InterPro" id="IPR020880">
    <property type="entry name" value="UPF0741"/>
</dbReference>
<proteinExistence type="inferred from homology"/>
<sequence>MQNKFLICDDCQGVNCKSLEKKLTKLDPEAEIEIGCQSYCGPGRRKTFAFVNNRPLAALTEDELMEKVEKQLQKPRDHEEEERLRKRNEERKRRKEEQDRKLKEKLAQRKHK</sequence>